<name>AROC_YERPP</name>
<evidence type="ECO:0000255" key="1">
    <source>
        <dbReference type="HAMAP-Rule" id="MF_00300"/>
    </source>
</evidence>
<keyword id="KW-0028">Amino-acid biosynthesis</keyword>
<keyword id="KW-0057">Aromatic amino acid biosynthesis</keyword>
<keyword id="KW-0274">FAD</keyword>
<keyword id="KW-0285">Flavoprotein</keyword>
<keyword id="KW-0288">FMN</keyword>
<keyword id="KW-0456">Lyase</keyword>
<keyword id="KW-0521">NADP</keyword>
<dbReference type="EC" id="4.2.3.5" evidence="1"/>
<dbReference type="EMBL" id="CP000668">
    <property type="protein sequence ID" value="ABP40390.1"/>
    <property type="molecule type" value="Genomic_DNA"/>
</dbReference>
<dbReference type="RefSeq" id="WP_002209711.1">
    <property type="nucleotide sequence ID" value="NZ_CP009715.1"/>
</dbReference>
<dbReference type="SMR" id="A4TM78"/>
<dbReference type="GeneID" id="57975938"/>
<dbReference type="KEGG" id="ypp:YPDSF_2009"/>
<dbReference type="PATRIC" id="fig|386656.14.peg.3479"/>
<dbReference type="UniPathway" id="UPA00053">
    <property type="reaction ID" value="UER00090"/>
</dbReference>
<dbReference type="GO" id="GO:0005829">
    <property type="term" value="C:cytosol"/>
    <property type="evidence" value="ECO:0007669"/>
    <property type="project" value="TreeGrafter"/>
</dbReference>
<dbReference type="GO" id="GO:0004107">
    <property type="term" value="F:chorismate synthase activity"/>
    <property type="evidence" value="ECO:0007669"/>
    <property type="project" value="UniProtKB-UniRule"/>
</dbReference>
<dbReference type="GO" id="GO:0010181">
    <property type="term" value="F:FMN binding"/>
    <property type="evidence" value="ECO:0007669"/>
    <property type="project" value="TreeGrafter"/>
</dbReference>
<dbReference type="GO" id="GO:0008652">
    <property type="term" value="P:amino acid biosynthetic process"/>
    <property type="evidence" value="ECO:0007669"/>
    <property type="project" value="UniProtKB-KW"/>
</dbReference>
<dbReference type="GO" id="GO:0009073">
    <property type="term" value="P:aromatic amino acid family biosynthetic process"/>
    <property type="evidence" value="ECO:0007669"/>
    <property type="project" value="UniProtKB-KW"/>
</dbReference>
<dbReference type="GO" id="GO:0009423">
    <property type="term" value="P:chorismate biosynthetic process"/>
    <property type="evidence" value="ECO:0007669"/>
    <property type="project" value="UniProtKB-UniRule"/>
</dbReference>
<dbReference type="CDD" id="cd07304">
    <property type="entry name" value="Chorismate_synthase"/>
    <property type="match status" value="1"/>
</dbReference>
<dbReference type="FunFam" id="3.60.150.10:FF:000001">
    <property type="entry name" value="Chorismate synthase"/>
    <property type="match status" value="1"/>
</dbReference>
<dbReference type="Gene3D" id="3.60.150.10">
    <property type="entry name" value="Chorismate synthase AroC"/>
    <property type="match status" value="1"/>
</dbReference>
<dbReference type="HAMAP" id="MF_00300">
    <property type="entry name" value="Chorismate_synth"/>
    <property type="match status" value="1"/>
</dbReference>
<dbReference type="InterPro" id="IPR000453">
    <property type="entry name" value="Chorismate_synth"/>
</dbReference>
<dbReference type="InterPro" id="IPR035904">
    <property type="entry name" value="Chorismate_synth_AroC_sf"/>
</dbReference>
<dbReference type="InterPro" id="IPR020541">
    <property type="entry name" value="Chorismate_synthase_CS"/>
</dbReference>
<dbReference type="NCBIfam" id="TIGR00033">
    <property type="entry name" value="aroC"/>
    <property type="match status" value="1"/>
</dbReference>
<dbReference type="NCBIfam" id="NF003793">
    <property type="entry name" value="PRK05382.1"/>
    <property type="match status" value="1"/>
</dbReference>
<dbReference type="PANTHER" id="PTHR21085">
    <property type="entry name" value="CHORISMATE SYNTHASE"/>
    <property type="match status" value="1"/>
</dbReference>
<dbReference type="PANTHER" id="PTHR21085:SF0">
    <property type="entry name" value="CHORISMATE SYNTHASE"/>
    <property type="match status" value="1"/>
</dbReference>
<dbReference type="Pfam" id="PF01264">
    <property type="entry name" value="Chorismate_synt"/>
    <property type="match status" value="1"/>
</dbReference>
<dbReference type="PIRSF" id="PIRSF001456">
    <property type="entry name" value="Chorismate_synth"/>
    <property type="match status" value="1"/>
</dbReference>
<dbReference type="SUPFAM" id="SSF103263">
    <property type="entry name" value="Chorismate synthase, AroC"/>
    <property type="match status" value="1"/>
</dbReference>
<dbReference type="PROSITE" id="PS00787">
    <property type="entry name" value="CHORISMATE_SYNTHASE_1"/>
    <property type="match status" value="1"/>
</dbReference>
<dbReference type="PROSITE" id="PS00788">
    <property type="entry name" value="CHORISMATE_SYNTHASE_2"/>
    <property type="match status" value="1"/>
</dbReference>
<dbReference type="PROSITE" id="PS00789">
    <property type="entry name" value="CHORISMATE_SYNTHASE_3"/>
    <property type="match status" value="1"/>
</dbReference>
<reference key="1">
    <citation type="submission" date="2007-02" db="EMBL/GenBank/DDBJ databases">
        <title>Complete sequence of chromosome of Yersinia pestis Pestoides F.</title>
        <authorList>
            <consortium name="US DOE Joint Genome Institute"/>
            <person name="Copeland A."/>
            <person name="Lucas S."/>
            <person name="Lapidus A."/>
            <person name="Barry K."/>
            <person name="Detter J.C."/>
            <person name="Glavina del Rio T."/>
            <person name="Hammon N."/>
            <person name="Israni S."/>
            <person name="Dalin E."/>
            <person name="Tice H."/>
            <person name="Pitluck S."/>
            <person name="Di Bartolo G."/>
            <person name="Chain P."/>
            <person name="Malfatti S."/>
            <person name="Shin M."/>
            <person name="Vergez L."/>
            <person name="Schmutz J."/>
            <person name="Larimer F."/>
            <person name="Land M."/>
            <person name="Hauser L."/>
            <person name="Worsham P."/>
            <person name="Chu M."/>
            <person name="Bearden S."/>
            <person name="Garcia E."/>
            <person name="Richardson P."/>
        </authorList>
    </citation>
    <scope>NUCLEOTIDE SEQUENCE [LARGE SCALE GENOMIC DNA]</scope>
    <source>
        <strain>Pestoides F</strain>
    </source>
</reference>
<feature type="chain" id="PRO_1000022573" description="Chorismate synthase">
    <location>
        <begin position="1"/>
        <end position="361"/>
    </location>
</feature>
<feature type="binding site" evidence="1">
    <location>
        <position position="48"/>
    </location>
    <ligand>
        <name>NADP(+)</name>
        <dbReference type="ChEBI" id="CHEBI:58349"/>
    </ligand>
</feature>
<feature type="binding site" evidence="1">
    <location>
        <position position="54"/>
    </location>
    <ligand>
        <name>NADP(+)</name>
        <dbReference type="ChEBI" id="CHEBI:58349"/>
    </ligand>
</feature>
<feature type="binding site" evidence="1">
    <location>
        <begin position="125"/>
        <end position="127"/>
    </location>
    <ligand>
        <name>FMN</name>
        <dbReference type="ChEBI" id="CHEBI:58210"/>
    </ligand>
</feature>
<feature type="binding site" evidence="1">
    <location>
        <begin position="238"/>
        <end position="239"/>
    </location>
    <ligand>
        <name>FMN</name>
        <dbReference type="ChEBI" id="CHEBI:58210"/>
    </ligand>
</feature>
<feature type="binding site" evidence="1">
    <location>
        <position position="278"/>
    </location>
    <ligand>
        <name>FMN</name>
        <dbReference type="ChEBI" id="CHEBI:58210"/>
    </ligand>
</feature>
<feature type="binding site" evidence="1">
    <location>
        <begin position="293"/>
        <end position="297"/>
    </location>
    <ligand>
        <name>FMN</name>
        <dbReference type="ChEBI" id="CHEBI:58210"/>
    </ligand>
</feature>
<feature type="binding site" evidence="1">
    <location>
        <position position="319"/>
    </location>
    <ligand>
        <name>FMN</name>
        <dbReference type="ChEBI" id="CHEBI:58210"/>
    </ligand>
</feature>
<comment type="function">
    <text evidence="1">Catalyzes the anti-1,4-elimination of the C-3 phosphate and the C-6 proR hydrogen from 5-enolpyruvylshikimate-3-phosphate (EPSP) to yield chorismate, which is the branch point compound that serves as the starting substrate for the three terminal pathways of aromatic amino acid biosynthesis. This reaction introduces a second double bond into the aromatic ring system.</text>
</comment>
<comment type="catalytic activity">
    <reaction evidence="1">
        <text>5-O-(1-carboxyvinyl)-3-phosphoshikimate = chorismate + phosphate</text>
        <dbReference type="Rhea" id="RHEA:21020"/>
        <dbReference type="ChEBI" id="CHEBI:29748"/>
        <dbReference type="ChEBI" id="CHEBI:43474"/>
        <dbReference type="ChEBI" id="CHEBI:57701"/>
        <dbReference type="EC" id="4.2.3.5"/>
    </reaction>
</comment>
<comment type="cofactor">
    <cofactor evidence="1">
        <name>FMNH2</name>
        <dbReference type="ChEBI" id="CHEBI:57618"/>
    </cofactor>
    <text evidence="1">Reduced FMN (FMNH(2)).</text>
</comment>
<comment type="pathway">
    <text evidence="1">Metabolic intermediate biosynthesis; chorismate biosynthesis; chorismate from D-erythrose 4-phosphate and phosphoenolpyruvate: step 7/7.</text>
</comment>
<comment type="subunit">
    <text evidence="1">Homotetramer.</text>
</comment>
<comment type="similarity">
    <text evidence="1">Belongs to the chorismate synthase family.</text>
</comment>
<proteinExistence type="inferred from homology"/>
<organism>
    <name type="scientific">Yersinia pestis (strain Pestoides F)</name>
    <dbReference type="NCBI Taxonomy" id="386656"/>
    <lineage>
        <taxon>Bacteria</taxon>
        <taxon>Pseudomonadati</taxon>
        <taxon>Pseudomonadota</taxon>
        <taxon>Gammaproteobacteria</taxon>
        <taxon>Enterobacterales</taxon>
        <taxon>Yersiniaceae</taxon>
        <taxon>Yersinia</taxon>
    </lineage>
</organism>
<accession>A4TM78</accession>
<sequence>MAGNSIGQFFRVTTFGESHGIALGCIIDGVPPGIPITEADIQLDLDRRRPGTSRYTTQRRELDQVRILSGVFEGVTTGTSIGLMIENTDQRSQDYSAIKDVFRPGHADYTYEQKYGVRDYRGGGRSSARETAMRVAAGAIAKKYLAQKFGVQVRGYLAQMGDVSCDLLDWDLVEQNPFFCPDASKLEPLDALMRELKKAGDSIGAKITVVAENVPVGLGEPVFDRLDADLAHALMSINAVKGVEIGDGFAVVTKRGSENRDEITPQGFQSNHAGGILGGISSGQPVVAHIALKPTSSIMVPGQTINRQGEAVEMVTRGRHDPCVGIRAVPIAEAMMAIVLMDHLLRQRAQCGDVASDVPRW</sequence>
<gene>
    <name evidence="1" type="primary">aroC</name>
    <name type="ordered locus">YPDSF_2009</name>
</gene>
<protein>
    <recommendedName>
        <fullName evidence="1">Chorismate synthase</fullName>
        <shortName evidence="1">CS</shortName>
        <ecNumber evidence="1">4.2.3.5</ecNumber>
    </recommendedName>
    <alternativeName>
        <fullName evidence="1">5-enolpyruvylshikimate-3-phosphate phospholyase</fullName>
    </alternativeName>
</protein>